<protein>
    <recommendedName>
        <fullName evidence="1">Sulfate adenylyltransferase subunit 2</fullName>
        <ecNumber evidence="1">2.7.7.4</ecNumber>
    </recommendedName>
    <alternativeName>
        <fullName evidence="1">ATP-sulfurylase small subunit</fullName>
    </alternativeName>
    <alternativeName>
        <fullName evidence="1">Sulfate adenylate transferase</fullName>
        <shortName evidence="1">SAT</shortName>
    </alternativeName>
</protein>
<keyword id="KW-0067">ATP-binding</keyword>
<keyword id="KW-0547">Nucleotide-binding</keyword>
<keyword id="KW-0548">Nucleotidyltransferase</keyword>
<keyword id="KW-1185">Reference proteome</keyword>
<keyword id="KW-0808">Transferase</keyword>
<feature type="chain" id="PRO_1000008964" description="Sulfate adenylyltransferase subunit 2">
    <location>
        <begin position="1"/>
        <end position="302"/>
    </location>
</feature>
<reference key="1">
    <citation type="journal article" date="2003" name="Nat. Biotechnol.">
        <title>The genome sequence of the entomopathogenic bacterium Photorhabdus luminescens.</title>
        <authorList>
            <person name="Duchaud E."/>
            <person name="Rusniok C."/>
            <person name="Frangeul L."/>
            <person name="Buchrieser C."/>
            <person name="Givaudan A."/>
            <person name="Taourit S."/>
            <person name="Bocs S."/>
            <person name="Boursaux-Eude C."/>
            <person name="Chandler M."/>
            <person name="Charles J.-F."/>
            <person name="Dassa E."/>
            <person name="Derose R."/>
            <person name="Derzelle S."/>
            <person name="Freyssinet G."/>
            <person name="Gaudriault S."/>
            <person name="Medigue C."/>
            <person name="Lanois A."/>
            <person name="Powell K."/>
            <person name="Siguier P."/>
            <person name="Vincent R."/>
            <person name="Wingate V."/>
            <person name="Zouine M."/>
            <person name="Glaser P."/>
            <person name="Boemare N."/>
            <person name="Danchin A."/>
            <person name="Kunst F."/>
        </authorList>
    </citation>
    <scope>NUCLEOTIDE SEQUENCE [LARGE SCALE GENOMIC DNA]</scope>
    <source>
        <strain>DSM 15139 / CIP 105565 / TT01</strain>
    </source>
</reference>
<organism>
    <name type="scientific">Photorhabdus laumondii subsp. laumondii (strain DSM 15139 / CIP 105565 / TT01)</name>
    <name type="common">Photorhabdus luminescens subsp. laumondii</name>
    <dbReference type="NCBI Taxonomy" id="243265"/>
    <lineage>
        <taxon>Bacteria</taxon>
        <taxon>Pseudomonadati</taxon>
        <taxon>Pseudomonadota</taxon>
        <taxon>Gammaproteobacteria</taxon>
        <taxon>Enterobacterales</taxon>
        <taxon>Morganellaceae</taxon>
        <taxon>Photorhabdus</taxon>
    </lineage>
</organism>
<name>CYSD_PHOLL</name>
<comment type="function">
    <text evidence="1">With CysN forms the ATP sulfurylase (ATPS) that catalyzes the adenylation of sulfate producing adenosine 5'-phosphosulfate (APS) and diphosphate, the first enzymatic step in sulfur assimilation pathway. APS synthesis involves the formation of a high-energy phosphoric-sulfuric acid anhydride bond driven by GTP hydrolysis by CysN coupled to ATP hydrolysis by CysD.</text>
</comment>
<comment type="catalytic activity">
    <reaction evidence="1">
        <text>sulfate + ATP + H(+) = adenosine 5'-phosphosulfate + diphosphate</text>
        <dbReference type="Rhea" id="RHEA:18133"/>
        <dbReference type="ChEBI" id="CHEBI:15378"/>
        <dbReference type="ChEBI" id="CHEBI:16189"/>
        <dbReference type="ChEBI" id="CHEBI:30616"/>
        <dbReference type="ChEBI" id="CHEBI:33019"/>
        <dbReference type="ChEBI" id="CHEBI:58243"/>
        <dbReference type="EC" id="2.7.7.4"/>
    </reaction>
</comment>
<comment type="pathway">
    <text evidence="1">Sulfur metabolism; hydrogen sulfide biosynthesis; sulfite from sulfate: step 1/3.</text>
</comment>
<comment type="subunit">
    <text evidence="1">Heterodimer composed of CysD, the smaller subunit, and CysN.</text>
</comment>
<comment type="similarity">
    <text evidence="1">Belongs to the PAPS reductase family. CysD subfamily.</text>
</comment>
<accession>Q7N8L1</accession>
<sequence length="302" mass="35273">MDEKRLTHLQQLEAESIHIIREVAAEFENPVMLYSIGKDSSVMLHLARKAFYPGTLPFPLLHVDTGWKFREMYEFRDRTAKNYGFELLVHRNLQGEAMGINPFVHGSAKHTDIMKTEGLKQALDKYGFDAAFGGARRDEEKSRAKERIYSFRDRSHRWDPKNQRPELWRNYNGQINKGESIRVFPLSNWTELDVWQYIYLEQIDIVPLYFAKLRPVLEREGTLIMVDDNRIDLKPGEVISQRKVRFRTLGCWPLTGAVKSDAETLPEIIEEMLISTTSERQGRLIDSDQSASMELKKRQGYF</sequence>
<evidence type="ECO:0000255" key="1">
    <source>
        <dbReference type="HAMAP-Rule" id="MF_00064"/>
    </source>
</evidence>
<proteinExistence type="inferred from homology"/>
<dbReference type="EC" id="2.7.7.4" evidence="1"/>
<dbReference type="EMBL" id="BX571861">
    <property type="protein sequence ID" value="CAE13004.1"/>
    <property type="molecule type" value="Genomic_DNA"/>
</dbReference>
<dbReference type="RefSeq" id="WP_011145085.1">
    <property type="nucleotide sequence ID" value="NC_005126.1"/>
</dbReference>
<dbReference type="SMR" id="Q7N8L1"/>
<dbReference type="STRING" id="243265.plu0709"/>
<dbReference type="GeneID" id="48847004"/>
<dbReference type="KEGG" id="plu:plu0709"/>
<dbReference type="eggNOG" id="COG0175">
    <property type="taxonomic scope" value="Bacteria"/>
</dbReference>
<dbReference type="HOGENOM" id="CLU_043026_0_0_6"/>
<dbReference type="OrthoDB" id="9772604at2"/>
<dbReference type="UniPathway" id="UPA00140">
    <property type="reaction ID" value="UER00204"/>
</dbReference>
<dbReference type="Proteomes" id="UP000002514">
    <property type="component" value="Chromosome"/>
</dbReference>
<dbReference type="GO" id="GO:0005524">
    <property type="term" value="F:ATP binding"/>
    <property type="evidence" value="ECO:0007669"/>
    <property type="project" value="UniProtKB-KW"/>
</dbReference>
<dbReference type="GO" id="GO:0004781">
    <property type="term" value="F:sulfate adenylyltransferase (ATP) activity"/>
    <property type="evidence" value="ECO:0007669"/>
    <property type="project" value="UniProtKB-UniRule"/>
</dbReference>
<dbReference type="GO" id="GO:0070814">
    <property type="term" value="P:hydrogen sulfide biosynthetic process"/>
    <property type="evidence" value="ECO:0007669"/>
    <property type="project" value="UniProtKB-UniRule"/>
</dbReference>
<dbReference type="GO" id="GO:0000103">
    <property type="term" value="P:sulfate assimilation"/>
    <property type="evidence" value="ECO:0007669"/>
    <property type="project" value="UniProtKB-UniRule"/>
</dbReference>
<dbReference type="CDD" id="cd23946">
    <property type="entry name" value="Sulfate_adenylyltransferase_2"/>
    <property type="match status" value="1"/>
</dbReference>
<dbReference type="FunFam" id="3.40.50.620:FF:000002">
    <property type="entry name" value="Sulfate adenylyltransferase subunit 2"/>
    <property type="match status" value="1"/>
</dbReference>
<dbReference type="Gene3D" id="3.40.50.620">
    <property type="entry name" value="HUPs"/>
    <property type="match status" value="1"/>
</dbReference>
<dbReference type="HAMAP" id="MF_00064">
    <property type="entry name" value="Sulf_adenylyltr_sub2"/>
    <property type="match status" value="1"/>
</dbReference>
<dbReference type="InterPro" id="IPR002500">
    <property type="entry name" value="PAPS_reduct_dom"/>
</dbReference>
<dbReference type="InterPro" id="IPR014729">
    <property type="entry name" value="Rossmann-like_a/b/a_fold"/>
</dbReference>
<dbReference type="InterPro" id="IPR011784">
    <property type="entry name" value="SO4_adenylTrfase_ssu"/>
</dbReference>
<dbReference type="InterPro" id="IPR050128">
    <property type="entry name" value="Sulfate_adenylyltrnsfr_sub2"/>
</dbReference>
<dbReference type="NCBIfam" id="TIGR02039">
    <property type="entry name" value="CysD"/>
    <property type="match status" value="1"/>
</dbReference>
<dbReference type="NCBIfam" id="NF003587">
    <property type="entry name" value="PRK05253.1"/>
    <property type="match status" value="1"/>
</dbReference>
<dbReference type="NCBIfam" id="NF009214">
    <property type="entry name" value="PRK12563.1"/>
    <property type="match status" value="1"/>
</dbReference>
<dbReference type="PANTHER" id="PTHR43196">
    <property type="entry name" value="SULFATE ADENYLYLTRANSFERASE SUBUNIT 2"/>
    <property type="match status" value="1"/>
</dbReference>
<dbReference type="PANTHER" id="PTHR43196:SF1">
    <property type="entry name" value="SULFATE ADENYLYLTRANSFERASE SUBUNIT 2"/>
    <property type="match status" value="1"/>
</dbReference>
<dbReference type="Pfam" id="PF01507">
    <property type="entry name" value="PAPS_reduct"/>
    <property type="match status" value="1"/>
</dbReference>
<dbReference type="PIRSF" id="PIRSF002936">
    <property type="entry name" value="CysDAde_trans"/>
    <property type="match status" value="1"/>
</dbReference>
<dbReference type="SUPFAM" id="SSF52402">
    <property type="entry name" value="Adenine nucleotide alpha hydrolases-like"/>
    <property type="match status" value="1"/>
</dbReference>
<gene>
    <name evidence="1" type="primary">cysD</name>
    <name type="ordered locus">plu0709</name>
</gene>